<sequence>MQNRPIIIGVTGGSGGGKTSVSRAILSHFPDEKISMIEHDSYYKDQSHLTFEERVKTNYDHPFAFDTDLMIEQIKELLAGRPVDIPTYDYTEHTRSSKTYRQEPQDVFIVEGILVLEDKRLRDLMDIKIFVDTDDDVRIIRRIKRDMEERGRSLDSVINQYLGVVKPMYHQFIESTKRYADIVIPEGVSNTVAIDLLTTKIAKILEEARNSK</sequence>
<comment type="catalytic activity">
    <reaction evidence="1">
        <text>uridine + ATP = UMP + ADP + H(+)</text>
        <dbReference type="Rhea" id="RHEA:16825"/>
        <dbReference type="ChEBI" id="CHEBI:15378"/>
        <dbReference type="ChEBI" id="CHEBI:16704"/>
        <dbReference type="ChEBI" id="CHEBI:30616"/>
        <dbReference type="ChEBI" id="CHEBI:57865"/>
        <dbReference type="ChEBI" id="CHEBI:456216"/>
        <dbReference type="EC" id="2.7.1.48"/>
    </reaction>
</comment>
<comment type="catalytic activity">
    <reaction evidence="1">
        <text>cytidine + ATP = CMP + ADP + H(+)</text>
        <dbReference type="Rhea" id="RHEA:24674"/>
        <dbReference type="ChEBI" id="CHEBI:15378"/>
        <dbReference type="ChEBI" id="CHEBI:17562"/>
        <dbReference type="ChEBI" id="CHEBI:30616"/>
        <dbReference type="ChEBI" id="CHEBI:60377"/>
        <dbReference type="ChEBI" id="CHEBI:456216"/>
        <dbReference type="EC" id="2.7.1.48"/>
    </reaction>
</comment>
<comment type="pathway">
    <text evidence="1">Pyrimidine metabolism; CTP biosynthesis via salvage pathway; CTP from cytidine: step 1/3.</text>
</comment>
<comment type="pathway">
    <text evidence="1">Pyrimidine metabolism; UMP biosynthesis via salvage pathway; UMP from uridine: step 1/1.</text>
</comment>
<comment type="subcellular location">
    <subcellularLocation>
        <location evidence="1">Cytoplasm</location>
    </subcellularLocation>
</comment>
<comment type="similarity">
    <text evidence="1">Belongs to the uridine kinase family.</text>
</comment>
<name>URK_STRZT</name>
<organism>
    <name type="scientific">Streptococcus pneumoniae (strain Taiwan19F-14)</name>
    <dbReference type="NCBI Taxonomy" id="487213"/>
    <lineage>
        <taxon>Bacteria</taxon>
        <taxon>Bacillati</taxon>
        <taxon>Bacillota</taxon>
        <taxon>Bacilli</taxon>
        <taxon>Lactobacillales</taxon>
        <taxon>Streptococcaceae</taxon>
        <taxon>Streptococcus</taxon>
    </lineage>
</organism>
<feature type="chain" id="PRO_1000200526" description="Uridine kinase">
    <location>
        <begin position="1"/>
        <end position="212"/>
    </location>
</feature>
<feature type="binding site" evidence="1">
    <location>
        <begin position="12"/>
        <end position="19"/>
    </location>
    <ligand>
        <name>ATP</name>
        <dbReference type="ChEBI" id="CHEBI:30616"/>
    </ligand>
</feature>
<protein>
    <recommendedName>
        <fullName evidence="1">Uridine kinase</fullName>
        <ecNumber evidence="1">2.7.1.48</ecNumber>
    </recommendedName>
    <alternativeName>
        <fullName evidence="1">Cytidine monophosphokinase</fullName>
    </alternativeName>
    <alternativeName>
        <fullName evidence="1">Uridine monophosphokinase</fullName>
    </alternativeName>
</protein>
<reference key="1">
    <citation type="journal article" date="2010" name="Genome Biol.">
        <title>Structure and dynamics of the pan-genome of Streptococcus pneumoniae and closely related species.</title>
        <authorList>
            <person name="Donati C."/>
            <person name="Hiller N.L."/>
            <person name="Tettelin H."/>
            <person name="Muzzi A."/>
            <person name="Croucher N.J."/>
            <person name="Angiuoli S.V."/>
            <person name="Oggioni M."/>
            <person name="Dunning Hotopp J.C."/>
            <person name="Hu F.Z."/>
            <person name="Riley D.R."/>
            <person name="Covacci A."/>
            <person name="Mitchell T.J."/>
            <person name="Bentley S.D."/>
            <person name="Kilian M."/>
            <person name="Ehrlich G.D."/>
            <person name="Rappuoli R."/>
            <person name="Moxon E.R."/>
            <person name="Masignani V."/>
        </authorList>
    </citation>
    <scope>NUCLEOTIDE SEQUENCE [LARGE SCALE GENOMIC DNA]</scope>
    <source>
        <strain>Taiwan19F-14</strain>
    </source>
</reference>
<keyword id="KW-0067">ATP-binding</keyword>
<keyword id="KW-0963">Cytoplasm</keyword>
<keyword id="KW-0418">Kinase</keyword>
<keyword id="KW-0547">Nucleotide-binding</keyword>
<keyword id="KW-0808">Transferase</keyword>
<evidence type="ECO:0000255" key="1">
    <source>
        <dbReference type="HAMAP-Rule" id="MF_00551"/>
    </source>
</evidence>
<accession>C1CR90</accession>
<gene>
    <name evidence="1" type="primary">udk</name>
    <name type="ordered locus">SPT_1018</name>
</gene>
<dbReference type="EC" id="2.7.1.48" evidence="1"/>
<dbReference type="EMBL" id="CP000921">
    <property type="protein sequence ID" value="ACO22458.1"/>
    <property type="molecule type" value="Genomic_DNA"/>
</dbReference>
<dbReference type="RefSeq" id="WP_001181378.1">
    <property type="nucleotide sequence ID" value="NC_012469.1"/>
</dbReference>
<dbReference type="SMR" id="C1CR90"/>
<dbReference type="GeneID" id="45653496"/>
<dbReference type="KEGG" id="snt:SPT_1018"/>
<dbReference type="HOGENOM" id="CLU_021278_1_2_9"/>
<dbReference type="UniPathway" id="UPA00574">
    <property type="reaction ID" value="UER00637"/>
</dbReference>
<dbReference type="UniPathway" id="UPA00579">
    <property type="reaction ID" value="UER00640"/>
</dbReference>
<dbReference type="GO" id="GO:0005737">
    <property type="term" value="C:cytoplasm"/>
    <property type="evidence" value="ECO:0007669"/>
    <property type="project" value="UniProtKB-SubCell"/>
</dbReference>
<dbReference type="GO" id="GO:0005524">
    <property type="term" value="F:ATP binding"/>
    <property type="evidence" value="ECO:0007669"/>
    <property type="project" value="UniProtKB-UniRule"/>
</dbReference>
<dbReference type="GO" id="GO:0043771">
    <property type="term" value="F:cytidine kinase activity"/>
    <property type="evidence" value="ECO:0007669"/>
    <property type="project" value="RHEA"/>
</dbReference>
<dbReference type="GO" id="GO:0004849">
    <property type="term" value="F:uridine kinase activity"/>
    <property type="evidence" value="ECO:0007669"/>
    <property type="project" value="UniProtKB-UniRule"/>
</dbReference>
<dbReference type="GO" id="GO:0044211">
    <property type="term" value="P:CTP salvage"/>
    <property type="evidence" value="ECO:0007669"/>
    <property type="project" value="UniProtKB-UniRule"/>
</dbReference>
<dbReference type="GO" id="GO:0044206">
    <property type="term" value="P:UMP salvage"/>
    <property type="evidence" value="ECO:0007669"/>
    <property type="project" value="UniProtKB-UniRule"/>
</dbReference>
<dbReference type="CDD" id="cd02023">
    <property type="entry name" value="UMPK"/>
    <property type="match status" value="1"/>
</dbReference>
<dbReference type="Gene3D" id="3.40.50.300">
    <property type="entry name" value="P-loop containing nucleotide triphosphate hydrolases"/>
    <property type="match status" value="1"/>
</dbReference>
<dbReference type="HAMAP" id="MF_00551">
    <property type="entry name" value="Uridine_kinase"/>
    <property type="match status" value="1"/>
</dbReference>
<dbReference type="InterPro" id="IPR027417">
    <property type="entry name" value="P-loop_NTPase"/>
</dbReference>
<dbReference type="InterPro" id="IPR006083">
    <property type="entry name" value="PRK/URK"/>
</dbReference>
<dbReference type="InterPro" id="IPR026008">
    <property type="entry name" value="Uridine_kinase"/>
</dbReference>
<dbReference type="InterPro" id="IPR000764">
    <property type="entry name" value="Uridine_kinase-like"/>
</dbReference>
<dbReference type="NCBIfam" id="NF004018">
    <property type="entry name" value="PRK05480.1"/>
    <property type="match status" value="1"/>
</dbReference>
<dbReference type="NCBIfam" id="TIGR00235">
    <property type="entry name" value="udk"/>
    <property type="match status" value="1"/>
</dbReference>
<dbReference type="PANTHER" id="PTHR10285">
    <property type="entry name" value="URIDINE KINASE"/>
    <property type="match status" value="1"/>
</dbReference>
<dbReference type="Pfam" id="PF00485">
    <property type="entry name" value="PRK"/>
    <property type="match status" value="1"/>
</dbReference>
<dbReference type="PRINTS" id="PR00988">
    <property type="entry name" value="URIDINKINASE"/>
</dbReference>
<dbReference type="SUPFAM" id="SSF52540">
    <property type="entry name" value="P-loop containing nucleoside triphosphate hydrolases"/>
    <property type="match status" value="1"/>
</dbReference>
<proteinExistence type="inferred from homology"/>